<name>HRCA_RUMCH</name>
<gene>
    <name evidence="1" type="primary">hrcA</name>
    <name type="ordered locus">Ccel_1800</name>
</gene>
<feature type="chain" id="PRO_1000118296" description="Heat-inducible transcription repressor HrcA">
    <location>
        <begin position="1"/>
        <end position="348"/>
    </location>
</feature>
<comment type="function">
    <text evidence="1">Negative regulator of class I heat shock genes (grpE-dnaK-dnaJ and groELS operons). Prevents heat-shock induction of these operons.</text>
</comment>
<comment type="similarity">
    <text evidence="1">Belongs to the HrcA family.</text>
</comment>
<protein>
    <recommendedName>
        <fullName evidence="1">Heat-inducible transcription repressor HrcA</fullName>
    </recommendedName>
</protein>
<evidence type="ECO:0000255" key="1">
    <source>
        <dbReference type="HAMAP-Rule" id="MF_00081"/>
    </source>
</evidence>
<accession>B8I307</accession>
<proteinExistence type="inferred from homology"/>
<keyword id="KW-1185">Reference proteome</keyword>
<keyword id="KW-0678">Repressor</keyword>
<keyword id="KW-0346">Stress response</keyword>
<keyword id="KW-0804">Transcription</keyword>
<keyword id="KW-0805">Transcription regulation</keyword>
<sequence>MLLDDRKLKILQAIIDDYIYSAEPVGSRTIAKKHELGLSSATIRNEMADLEEMGLLEQPYTSAGRIPSDRGYRLYVDQLMKIDELNECEIEKIRSDMNIRINELSQLIRSASAVMAKITKYTSMAVSPHMKKSVLKSVQVVPIESGKALVIIVTDANIVRNNLIRIPESVTPAFLIQISNMLNEQLKGFTLEMLKSDILNEKFEKLTALPFRLIKPILDGIEELIITIDNPEVYLEGATNILNFPEFKEVDKAKEFLNILDEKKLVSDLLTNSVNDNNEIIIHIGNENAMEGIKDCSLVTASYSVGNHVIGTIGIIGPTRMEYSRVVSSMNYIRNKINQEILKLLDNG</sequence>
<dbReference type="EMBL" id="CP001348">
    <property type="protein sequence ID" value="ACL76150.1"/>
    <property type="molecule type" value="Genomic_DNA"/>
</dbReference>
<dbReference type="RefSeq" id="WP_015925265.1">
    <property type="nucleotide sequence ID" value="NC_011898.1"/>
</dbReference>
<dbReference type="SMR" id="B8I307"/>
<dbReference type="STRING" id="394503.Ccel_1800"/>
<dbReference type="KEGG" id="cce:Ccel_1800"/>
<dbReference type="eggNOG" id="COG1420">
    <property type="taxonomic scope" value="Bacteria"/>
</dbReference>
<dbReference type="HOGENOM" id="CLU_050019_1_0_9"/>
<dbReference type="OrthoDB" id="9783139at2"/>
<dbReference type="Proteomes" id="UP000001349">
    <property type="component" value="Chromosome"/>
</dbReference>
<dbReference type="GO" id="GO:0003677">
    <property type="term" value="F:DNA binding"/>
    <property type="evidence" value="ECO:0007669"/>
    <property type="project" value="InterPro"/>
</dbReference>
<dbReference type="GO" id="GO:0045892">
    <property type="term" value="P:negative regulation of DNA-templated transcription"/>
    <property type="evidence" value="ECO:0007669"/>
    <property type="project" value="UniProtKB-UniRule"/>
</dbReference>
<dbReference type="FunFam" id="1.10.10.10:FF:000049">
    <property type="entry name" value="Heat-inducible transcription repressor HrcA"/>
    <property type="match status" value="1"/>
</dbReference>
<dbReference type="Gene3D" id="3.30.450.40">
    <property type="match status" value="1"/>
</dbReference>
<dbReference type="Gene3D" id="3.30.390.60">
    <property type="entry name" value="Heat-inducible transcription repressor hrca homolog, domain 3"/>
    <property type="match status" value="1"/>
</dbReference>
<dbReference type="Gene3D" id="1.10.10.10">
    <property type="entry name" value="Winged helix-like DNA-binding domain superfamily/Winged helix DNA-binding domain"/>
    <property type="match status" value="1"/>
</dbReference>
<dbReference type="HAMAP" id="MF_00081">
    <property type="entry name" value="HrcA"/>
    <property type="match status" value="1"/>
</dbReference>
<dbReference type="InterPro" id="IPR029016">
    <property type="entry name" value="GAF-like_dom_sf"/>
</dbReference>
<dbReference type="InterPro" id="IPR002571">
    <property type="entry name" value="HrcA"/>
</dbReference>
<dbReference type="InterPro" id="IPR021153">
    <property type="entry name" value="HrcA_C"/>
</dbReference>
<dbReference type="InterPro" id="IPR036388">
    <property type="entry name" value="WH-like_DNA-bd_sf"/>
</dbReference>
<dbReference type="InterPro" id="IPR036390">
    <property type="entry name" value="WH_DNA-bd_sf"/>
</dbReference>
<dbReference type="InterPro" id="IPR005104">
    <property type="entry name" value="WHTH_HrcA_DNA-bd"/>
</dbReference>
<dbReference type="InterPro" id="IPR023120">
    <property type="entry name" value="WHTH_transcript_rep_HrcA_IDD"/>
</dbReference>
<dbReference type="NCBIfam" id="TIGR00331">
    <property type="entry name" value="hrcA"/>
    <property type="match status" value="1"/>
</dbReference>
<dbReference type="PANTHER" id="PTHR34824">
    <property type="entry name" value="HEAT-INDUCIBLE TRANSCRIPTION REPRESSOR HRCA"/>
    <property type="match status" value="1"/>
</dbReference>
<dbReference type="PANTHER" id="PTHR34824:SF1">
    <property type="entry name" value="HEAT-INDUCIBLE TRANSCRIPTION REPRESSOR HRCA"/>
    <property type="match status" value="1"/>
</dbReference>
<dbReference type="Pfam" id="PF01628">
    <property type="entry name" value="HrcA"/>
    <property type="match status" value="1"/>
</dbReference>
<dbReference type="Pfam" id="PF03444">
    <property type="entry name" value="HrcA_DNA-bdg"/>
    <property type="match status" value="1"/>
</dbReference>
<dbReference type="PIRSF" id="PIRSF005485">
    <property type="entry name" value="HrcA"/>
    <property type="match status" value="1"/>
</dbReference>
<dbReference type="SUPFAM" id="SSF55781">
    <property type="entry name" value="GAF domain-like"/>
    <property type="match status" value="1"/>
</dbReference>
<dbReference type="SUPFAM" id="SSF46785">
    <property type="entry name" value="Winged helix' DNA-binding domain"/>
    <property type="match status" value="1"/>
</dbReference>
<reference key="1">
    <citation type="submission" date="2009-01" db="EMBL/GenBank/DDBJ databases">
        <title>Complete sequence of Clostridium cellulolyticum H10.</title>
        <authorList>
            <consortium name="US DOE Joint Genome Institute"/>
            <person name="Lucas S."/>
            <person name="Copeland A."/>
            <person name="Lapidus A."/>
            <person name="Glavina del Rio T."/>
            <person name="Dalin E."/>
            <person name="Tice H."/>
            <person name="Bruce D."/>
            <person name="Goodwin L."/>
            <person name="Pitluck S."/>
            <person name="Chertkov O."/>
            <person name="Saunders E."/>
            <person name="Brettin T."/>
            <person name="Detter J.C."/>
            <person name="Han C."/>
            <person name="Larimer F."/>
            <person name="Land M."/>
            <person name="Hauser L."/>
            <person name="Kyrpides N."/>
            <person name="Ivanova N."/>
            <person name="Zhou J."/>
            <person name="Richardson P."/>
        </authorList>
    </citation>
    <scope>NUCLEOTIDE SEQUENCE [LARGE SCALE GENOMIC DNA]</scope>
    <source>
        <strain>ATCC 35319 / DSM 5812 / JCM 6584 / H10</strain>
    </source>
</reference>
<organism>
    <name type="scientific">Ruminiclostridium cellulolyticum (strain ATCC 35319 / DSM 5812 / JCM 6584 / H10)</name>
    <name type="common">Clostridium cellulolyticum</name>
    <dbReference type="NCBI Taxonomy" id="394503"/>
    <lineage>
        <taxon>Bacteria</taxon>
        <taxon>Bacillati</taxon>
        <taxon>Bacillota</taxon>
        <taxon>Clostridia</taxon>
        <taxon>Eubacteriales</taxon>
        <taxon>Oscillospiraceae</taxon>
        <taxon>Ruminiclostridium</taxon>
    </lineage>
</organism>